<accession>B0BXB8</accession>
<gene>
    <name evidence="1" type="primary">folE</name>
    <name type="ordered locus">RrIowa_0630</name>
</gene>
<keyword id="KW-0342">GTP-binding</keyword>
<keyword id="KW-0378">Hydrolase</keyword>
<keyword id="KW-0479">Metal-binding</keyword>
<keyword id="KW-0547">Nucleotide-binding</keyword>
<keyword id="KW-0554">One-carbon metabolism</keyword>
<keyword id="KW-0862">Zinc</keyword>
<sequence>MSKPTREEAKEAVRTLLKFIGEDPSREGLLKTPDRVINSYAEIFSGYGKDVAEILNTKFYETCNFRDFILLNIKFTSFCEHHILPFNGTVDIAYVPDNCIVGISKLARIVNIFARRLQIQEKMTVQIAESVQENLKPLGVAVKISAVHSCMSMRGVMQDNSVMNTMHYTGIFAEQQKYRHEFLNLTAKR</sequence>
<protein>
    <recommendedName>
        <fullName evidence="1">GTP cyclohydrolase 1</fullName>
        <ecNumber evidence="1">3.5.4.16</ecNumber>
    </recommendedName>
    <alternativeName>
        <fullName evidence="1">GTP cyclohydrolase I</fullName>
        <shortName evidence="1">GTP-CH-I</shortName>
    </alternativeName>
</protein>
<organism>
    <name type="scientific">Rickettsia rickettsii (strain Iowa)</name>
    <dbReference type="NCBI Taxonomy" id="452659"/>
    <lineage>
        <taxon>Bacteria</taxon>
        <taxon>Pseudomonadati</taxon>
        <taxon>Pseudomonadota</taxon>
        <taxon>Alphaproteobacteria</taxon>
        <taxon>Rickettsiales</taxon>
        <taxon>Rickettsiaceae</taxon>
        <taxon>Rickettsieae</taxon>
        <taxon>Rickettsia</taxon>
        <taxon>spotted fever group</taxon>
    </lineage>
</organism>
<dbReference type="EC" id="3.5.4.16" evidence="1"/>
<dbReference type="EMBL" id="CP000766">
    <property type="protein sequence ID" value="ABY72494.1"/>
    <property type="molecule type" value="Genomic_DNA"/>
</dbReference>
<dbReference type="RefSeq" id="WP_012150725.1">
    <property type="nucleotide sequence ID" value="NC_010263.3"/>
</dbReference>
<dbReference type="SMR" id="B0BXB8"/>
<dbReference type="GeneID" id="79937283"/>
<dbReference type="KEGG" id="rrj:RrIowa_0630"/>
<dbReference type="eggNOG" id="COG0302">
    <property type="taxonomic scope" value="Bacteria"/>
</dbReference>
<dbReference type="HOGENOM" id="CLU_049768_3_1_5"/>
<dbReference type="UniPathway" id="UPA00848">
    <property type="reaction ID" value="UER00151"/>
</dbReference>
<dbReference type="Proteomes" id="UP000000796">
    <property type="component" value="Chromosome"/>
</dbReference>
<dbReference type="GO" id="GO:0005737">
    <property type="term" value="C:cytoplasm"/>
    <property type="evidence" value="ECO:0007669"/>
    <property type="project" value="TreeGrafter"/>
</dbReference>
<dbReference type="GO" id="GO:0005525">
    <property type="term" value="F:GTP binding"/>
    <property type="evidence" value="ECO:0007669"/>
    <property type="project" value="UniProtKB-KW"/>
</dbReference>
<dbReference type="GO" id="GO:0003934">
    <property type="term" value="F:GTP cyclohydrolase I activity"/>
    <property type="evidence" value="ECO:0007669"/>
    <property type="project" value="UniProtKB-UniRule"/>
</dbReference>
<dbReference type="GO" id="GO:0008270">
    <property type="term" value="F:zinc ion binding"/>
    <property type="evidence" value="ECO:0007669"/>
    <property type="project" value="UniProtKB-UniRule"/>
</dbReference>
<dbReference type="GO" id="GO:0006730">
    <property type="term" value="P:one-carbon metabolic process"/>
    <property type="evidence" value="ECO:0007669"/>
    <property type="project" value="UniProtKB-UniRule"/>
</dbReference>
<dbReference type="GO" id="GO:0006729">
    <property type="term" value="P:tetrahydrobiopterin biosynthetic process"/>
    <property type="evidence" value="ECO:0007669"/>
    <property type="project" value="TreeGrafter"/>
</dbReference>
<dbReference type="GO" id="GO:0046654">
    <property type="term" value="P:tetrahydrofolate biosynthetic process"/>
    <property type="evidence" value="ECO:0007669"/>
    <property type="project" value="UniProtKB-UniRule"/>
</dbReference>
<dbReference type="FunFam" id="1.10.286.10:FF:000001">
    <property type="entry name" value="GTP cyclohydrolase 1"/>
    <property type="match status" value="1"/>
</dbReference>
<dbReference type="FunFam" id="3.30.1130.10:FF:000001">
    <property type="entry name" value="GTP cyclohydrolase 1"/>
    <property type="match status" value="1"/>
</dbReference>
<dbReference type="Gene3D" id="1.10.286.10">
    <property type="match status" value="1"/>
</dbReference>
<dbReference type="Gene3D" id="3.30.1130.10">
    <property type="match status" value="1"/>
</dbReference>
<dbReference type="HAMAP" id="MF_00223">
    <property type="entry name" value="FolE"/>
    <property type="match status" value="1"/>
</dbReference>
<dbReference type="InterPro" id="IPR043133">
    <property type="entry name" value="GTP-CH-I_C/QueF"/>
</dbReference>
<dbReference type="InterPro" id="IPR043134">
    <property type="entry name" value="GTP-CH-I_N"/>
</dbReference>
<dbReference type="InterPro" id="IPR001474">
    <property type="entry name" value="GTP_CycHdrlase_I"/>
</dbReference>
<dbReference type="InterPro" id="IPR018234">
    <property type="entry name" value="GTP_CycHdrlase_I_CS"/>
</dbReference>
<dbReference type="InterPro" id="IPR020602">
    <property type="entry name" value="GTP_CycHdrlase_I_dom"/>
</dbReference>
<dbReference type="NCBIfam" id="TIGR00063">
    <property type="entry name" value="folE"/>
    <property type="match status" value="1"/>
</dbReference>
<dbReference type="NCBIfam" id="NF006825">
    <property type="entry name" value="PRK09347.1-2"/>
    <property type="match status" value="1"/>
</dbReference>
<dbReference type="NCBIfam" id="NF006826">
    <property type="entry name" value="PRK09347.1-3"/>
    <property type="match status" value="1"/>
</dbReference>
<dbReference type="PANTHER" id="PTHR11109:SF7">
    <property type="entry name" value="GTP CYCLOHYDROLASE 1"/>
    <property type="match status" value="1"/>
</dbReference>
<dbReference type="PANTHER" id="PTHR11109">
    <property type="entry name" value="GTP CYCLOHYDROLASE I"/>
    <property type="match status" value="1"/>
</dbReference>
<dbReference type="Pfam" id="PF01227">
    <property type="entry name" value="GTP_cyclohydroI"/>
    <property type="match status" value="1"/>
</dbReference>
<dbReference type="SUPFAM" id="SSF55620">
    <property type="entry name" value="Tetrahydrobiopterin biosynthesis enzymes-like"/>
    <property type="match status" value="1"/>
</dbReference>
<dbReference type="PROSITE" id="PS00859">
    <property type="entry name" value="GTP_CYCLOHYDROL_1_1"/>
    <property type="match status" value="1"/>
</dbReference>
<dbReference type="PROSITE" id="PS00860">
    <property type="entry name" value="GTP_CYCLOHYDROL_1_2"/>
    <property type="match status" value="1"/>
</dbReference>
<reference key="1">
    <citation type="journal article" date="2008" name="Infect. Immun.">
        <title>Genomic comparison of virulent Rickettsia rickettsii Sheila Smith and avirulent Rickettsia rickettsii Iowa.</title>
        <authorList>
            <person name="Ellison D.W."/>
            <person name="Clark T.R."/>
            <person name="Sturdevant D.E."/>
            <person name="Virtaneva K."/>
            <person name="Porcella S.F."/>
            <person name="Hackstadt T."/>
        </authorList>
    </citation>
    <scope>NUCLEOTIDE SEQUENCE [LARGE SCALE GENOMIC DNA]</scope>
    <source>
        <strain>Iowa</strain>
    </source>
</reference>
<name>GCH1_RICRO</name>
<comment type="catalytic activity">
    <reaction evidence="1">
        <text>GTP + H2O = 7,8-dihydroneopterin 3'-triphosphate + formate + H(+)</text>
        <dbReference type="Rhea" id="RHEA:17473"/>
        <dbReference type="ChEBI" id="CHEBI:15377"/>
        <dbReference type="ChEBI" id="CHEBI:15378"/>
        <dbReference type="ChEBI" id="CHEBI:15740"/>
        <dbReference type="ChEBI" id="CHEBI:37565"/>
        <dbReference type="ChEBI" id="CHEBI:58462"/>
        <dbReference type="EC" id="3.5.4.16"/>
    </reaction>
</comment>
<comment type="pathway">
    <text evidence="1">Cofactor biosynthesis; 7,8-dihydroneopterin triphosphate biosynthesis; 7,8-dihydroneopterin triphosphate from GTP: step 1/1.</text>
</comment>
<comment type="subunit">
    <text evidence="1">Homomer.</text>
</comment>
<comment type="similarity">
    <text evidence="1">Belongs to the GTP cyclohydrolase I family.</text>
</comment>
<feature type="chain" id="PRO_1000078147" description="GTP cyclohydrolase 1">
    <location>
        <begin position="1"/>
        <end position="189"/>
    </location>
</feature>
<feature type="binding site" evidence="1">
    <location>
        <position position="79"/>
    </location>
    <ligand>
        <name>Zn(2+)</name>
        <dbReference type="ChEBI" id="CHEBI:29105"/>
    </ligand>
</feature>
<feature type="binding site" evidence="1">
    <location>
        <position position="82"/>
    </location>
    <ligand>
        <name>Zn(2+)</name>
        <dbReference type="ChEBI" id="CHEBI:29105"/>
    </ligand>
</feature>
<feature type="binding site" evidence="1">
    <location>
        <position position="150"/>
    </location>
    <ligand>
        <name>Zn(2+)</name>
        <dbReference type="ChEBI" id="CHEBI:29105"/>
    </ligand>
</feature>
<proteinExistence type="inferred from homology"/>
<evidence type="ECO:0000255" key="1">
    <source>
        <dbReference type="HAMAP-Rule" id="MF_00223"/>
    </source>
</evidence>